<evidence type="ECO:0000255" key="1">
    <source>
        <dbReference type="HAMAP-Rule" id="MF_01326"/>
    </source>
</evidence>
<evidence type="ECO:0000305" key="2"/>
<proteinExistence type="inferred from homology"/>
<reference key="1">
    <citation type="submission" date="2008-03" db="EMBL/GenBank/DDBJ databases">
        <title>Complete sequence of chromosome of Methylobacterium radiotolerans JCM 2831.</title>
        <authorList>
            <consortium name="US DOE Joint Genome Institute"/>
            <person name="Copeland A."/>
            <person name="Lucas S."/>
            <person name="Lapidus A."/>
            <person name="Glavina del Rio T."/>
            <person name="Dalin E."/>
            <person name="Tice H."/>
            <person name="Bruce D."/>
            <person name="Goodwin L."/>
            <person name="Pitluck S."/>
            <person name="Kiss H."/>
            <person name="Brettin T."/>
            <person name="Detter J.C."/>
            <person name="Han C."/>
            <person name="Kuske C.R."/>
            <person name="Schmutz J."/>
            <person name="Larimer F."/>
            <person name="Land M."/>
            <person name="Hauser L."/>
            <person name="Kyrpides N."/>
            <person name="Mikhailova N."/>
            <person name="Marx C.J."/>
            <person name="Richardson P."/>
        </authorList>
    </citation>
    <scope>NUCLEOTIDE SEQUENCE [LARGE SCALE GENOMIC DNA]</scope>
    <source>
        <strain>ATCC 27329 / DSM 1819 / JCM 2831 / NBRC 15690 / NCIMB 10815 / 0-1</strain>
    </source>
</reference>
<feature type="chain" id="PRO_1000142015" description="Large ribosomal subunit protein uL24">
    <location>
        <begin position="1"/>
        <end position="104"/>
    </location>
</feature>
<gene>
    <name evidence="1" type="primary">rplX</name>
    <name type="ordered locus">Mrad2831_2207</name>
</gene>
<organism>
    <name type="scientific">Methylobacterium radiotolerans (strain ATCC 27329 / DSM 1819 / JCM 2831 / NBRC 15690 / NCIMB 10815 / 0-1)</name>
    <dbReference type="NCBI Taxonomy" id="426355"/>
    <lineage>
        <taxon>Bacteria</taxon>
        <taxon>Pseudomonadati</taxon>
        <taxon>Pseudomonadota</taxon>
        <taxon>Alphaproteobacteria</taxon>
        <taxon>Hyphomicrobiales</taxon>
        <taxon>Methylobacteriaceae</taxon>
        <taxon>Methylobacterium</taxon>
    </lineage>
</organism>
<dbReference type="EMBL" id="CP001001">
    <property type="protein sequence ID" value="ACB24202.1"/>
    <property type="molecule type" value="Genomic_DNA"/>
</dbReference>
<dbReference type="RefSeq" id="WP_012319178.1">
    <property type="nucleotide sequence ID" value="NC_010505.1"/>
</dbReference>
<dbReference type="SMR" id="B1LWR5"/>
<dbReference type="STRING" id="426355.Mrad2831_2207"/>
<dbReference type="GeneID" id="96604893"/>
<dbReference type="KEGG" id="mrd:Mrad2831_2207"/>
<dbReference type="eggNOG" id="COG0198">
    <property type="taxonomic scope" value="Bacteria"/>
</dbReference>
<dbReference type="HOGENOM" id="CLU_093315_2_2_5"/>
<dbReference type="OrthoDB" id="9807419at2"/>
<dbReference type="Proteomes" id="UP000006589">
    <property type="component" value="Chromosome"/>
</dbReference>
<dbReference type="GO" id="GO:1990904">
    <property type="term" value="C:ribonucleoprotein complex"/>
    <property type="evidence" value="ECO:0007669"/>
    <property type="project" value="UniProtKB-KW"/>
</dbReference>
<dbReference type="GO" id="GO:0005840">
    <property type="term" value="C:ribosome"/>
    <property type="evidence" value="ECO:0007669"/>
    <property type="project" value="UniProtKB-KW"/>
</dbReference>
<dbReference type="GO" id="GO:0019843">
    <property type="term" value="F:rRNA binding"/>
    <property type="evidence" value="ECO:0007669"/>
    <property type="project" value="UniProtKB-UniRule"/>
</dbReference>
<dbReference type="GO" id="GO:0003735">
    <property type="term" value="F:structural constituent of ribosome"/>
    <property type="evidence" value="ECO:0007669"/>
    <property type="project" value="InterPro"/>
</dbReference>
<dbReference type="GO" id="GO:0006412">
    <property type="term" value="P:translation"/>
    <property type="evidence" value="ECO:0007669"/>
    <property type="project" value="UniProtKB-UniRule"/>
</dbReference>
<dbReference type="CDD" id="cd06089">
    <property type="entry name" value="KOW_RPL26"/>
    <property type="match status" value="1"/>
</dbReference>
<dbReference type="FunFam" id="2.30.30.30:FF:000004">
    <property type="entry name" value="50S ribosomal protein L24"/>
    <property type="match status" value="1"/>
</dbReference>
<dbReference type="Gene3D" id="2.30.30.30">
    <property type="match status" value="1"/>
</dbReference>
<dbReference type="HAMAP" id="MF_01326_B">
    <property type="entry name" value="Ribosomal_uL24_B"/>
    <property type="match status" value="1"/>
</dbReference>
<dbReference type="InterPro" id="IPR005824">
    <property type="entry name" value="KOW"/>
</dbReference>
<dbReference type="InterPro" id="IPR014722">
    <property type="entry name" value="Rib_uL2_dom2"/>
</dbReference>
<dbReference type="InterPro" id="IPR003256">
    <property type="entry name" value="Ribosomal_uL24"/>
</dbReference>
<dbReference type="InterPro" id="IPR041988">
    <property type="entry name" value="Ribosomal_uL24_KOW"/>
</dbReference>
<dbReference type="InterPro" id="IPR008991">
    <property type="entry name" value="Translation_prot_SH3-like_sf"/>
</dbReference>
<dbReference type="NCBIfam" id="TIGR01079">
    <property type="entry name" value="rplX_bact"/>
    <property type="match status" value="1"/>
</dbReference>
<dbReference type="PANTHER" id="PTHR12903">
    <property type="entry name" value="MITOCHONDRIAL RIBOSOMAL PROTEIN L24"/>
    <property type="match status" value="1"/>
</dbReference>
<dbReference type="Pfam" id="PF00467">
    <property type="entry name" value="KOW"/>
    <property type="match status" value="1"/>
</dbReference>
<dbReference type="Pfam" id="PF17136">
    <property type="entry name" value="ribosomal_L24"/>
    <property type="match status" value="1"/>
</dbReference>
<dbReference type="SMART" id="SM00739">
    <property type="entry name" value="KOW"/>
    <property type="match status" value="1"/>
</dbReference>
<dbReference type="SUPFAM" id="SSF50104">
    <property type="entry name" value="Translation proteins SH3-like domain"/>
    <property type="match status" value="1"/>
</dbReference>
<keyword id="KW-0687">Ribonucleoprotein</keyword>
<keyword id="KW-0689">Ribosomal protein</keyword>
<keyword id="KW-0694">RNA-binding</keyword>
<keyword id="KW-0699">rRNA-binding</keyword>
<sequence>MAAKIKKGDKVVVLTGRDSGRSGEVIQVLPKEGRAFVRGINLVKKHQKQTQNQEGGIISKEAAIQLSNIAVADANGKPTRVGFRILEDGRKVRFAKTTGDQIDG</sequence>
<comment type="function">
    <text evidence="1">One of two assembly initiator proteins, it binds directly to the 5'-end of the 23S rRNA, where it nucleates assembly of the 50S subunit.</text>
</comment>
<comment type="function">
    <text evidence="1">One of the proteins that surrounds the polypeptide exit tunnel on the outside of the subunit.</text>
</comment>
<comment type="subunit">
    <text evidence="1">Part of the 50S ribosomal subunit.</text>
</comment>
<comment type="similarity">
    <text evidence="1">Belongs to the universal ribosomal protein uL24 family.</text>
</comment>
<protein>
    <recommendedName>
        <fullName evidence="1">Large ribosomal subunit protein uL24</fullName>
    </recommendedName>
    <alternativeName>
        <fullName evidence="2">50S ribosomal protein L24</fullName>
    </alternativeName>
</protein>
<name>RL24_METRJ</name>
<accession>B1LWR5</accession>